<proteinExistence type="inferred from homology"/>
<dbReference type="EC" id="6.2.1.1" evidence="1"/>
<dbReference type="EMBL" id="CP000753">
    <property type="protein sequence ID" value="ABS07891.1"/>
    <property type="molecule type" value="Genomic_DNA"/>
</dbReference>
<dbReference type="RefSeq" id="WP_011846554.1">
    <property type="nucleotide sequence ID" value="NC_009665.1"/>
</dbReference>
<dbReference type="SMR" id="A6WM52"/>
<dbReference type="KEGG" id="sbm:Shew185_1748"/>
<dbReference type="HOGENOM" id="CLU_000022_3_6_6"/>
<dbReference type="GO" id="GO:0005829">
    <property type="term" value="C:cytosol"/>
    <property type="evidence" value="ECO:0007669"/>
    <property type="project" value="TreeGrafter"/>
</dbReference>
<dbReference type="GO" id="GO:0003987">
    <property type="term" value="F:acetate-CoA ligase activity"/>
    <property type="evidence" value="ECO:0007669"/>
    <property type="project" value="UniProtKB-UniRule"/>
</dbReference>
<dbReference type="GO" id="GO:0016208">
    <property type="term" value="F:AMP binding"/>
    <property type="evidence" value="ECO:0007669"/>
    <property type="project" value="InterPro"/>
</dbReference>
<dbReference type="GO" id="GO:0005524">
    <property type="term" value="F:ATP binding"/>
    <property type="evidence" value="ECO:0007669"/>
    <property type="project" value="UniProtKB-KW"/>
</dbReference>
<dbReference type="GO" id="GO:0046872">
    <property type="term" value="F:metal ion binding"/>
    <property type="evidence" value="ECO:0007669"/>
    <property type="project" value="UniProtKB-KW"/>
</dbReference>
<dbReference type="GO" id="GO:0019427">
    <property type="term" value="P:acetyl-CoA biosynthetic process from acetate"/>
    <property type="evidence" value="ECO:0007669"/>
    <property type="project" value="InterPro"/>
</dbReference>
<dbReference type="CDD" id="cd05966">
    <property type="entry name" value="ACS"/>
    <property type="match status" value="1"/>
</dbReference>
<dbReference type="FunFam" id="3.30.300.30:FF:000004">
    <property type="entry name" value="Acetyl-coenzyme A synthetase"/>
    <property type="match status" value="1"/>
</dbReference>
<dbReference type="FunFam" id="3.40.50.12780:FF:000001">
    <property type="entry name" value="Acetyl-coenzyme A synthetase"/>
    <property type="match status" value="1"/>
</dbReference>
<dbReference type="Gene3D" id="3.30.300.30">
    <property type="match status" value="1"/>
</dbReference>
<dbReference type="Gene3D" id="3.40.50.12780">
    <property type="entry name" value="N-terminal domain of ligase-like"/>
    <property type="match status" value="1"/>
</dbReference>
<dbReference type="HAMAP" id="MF_01123">
    <property type="entry name" value="Ac_CoA_synth"/>
    <property type="match status" value="1"/>
</dbReference>
<dbReference type="InterPro" id="IPR011904">
    <property type="entry name" value="Ac_CoA_lig"/>
</dbReference>
<dbReference type="InterPro" id="IPR032387">
    <property type="entry name" value="ACAS_N"/>
</dbReference>
<dbReference type="InterPro" id="IPR025110">
    <property type="entry name" value="AMP-bd_C"/>
</dbReference>
<dbReference type="InterPro" id="IPR045851">
    <property type="entry name" value="AMP-bd_C_sf"/>
</dbReference>
<dbReference type="InterPro" id="IPR020845">
    <property type="entry name" value="AMP-binding_CS"/>
</dbReference>
<dbReference type="InterPro" id="IPR000873">
    <property type="entry name" value="AMP-dep_synth/lig_dom"/>
</dbReference>
<dbReference type="InterPro" id="IPR042099">
    <property type="entry name" value="ANL_N_sf"/>
</dbReference>
<dbReference type="NCBIfam" id="TIGR02188">
    <property type="entry name" value="Ac_CoA_lig_AcsA"/>
    <property type="match status" value="1"/>
</dbReference>
<dbReference type="NCBIfam" id="NF001208">
    <property type="entry name" value="PRK00174.1"/>
    <property type="match status" value="1"/>
</dbReference>
<dbReference type="PANTHER" id="PTHR24095">
    <property type="entry name" value="ACETYL-COENZYME A SYNTHETASE"/>
    <property type="match status" value="1"/>
</dbReference>
<dbReference type="PANTHER" id="PTHR24095:SF243">
    <property type="entry name" value="ACETYL-COENZYME A SYNTHETASE"/>
    <property type="match status" value="1"/>
</dbReference>
<dbReference type="Pfam" id="PF16177">
    <property type="entry name" value="ACAS_N"/>
    <property type="match status" value="1"/>
</dbReference>
<dbReference type="Pfam" id="PF00501">
    <property type="entry name" value="AMP-binding"/>
    <property type="match status" value="1"/>
</dbReference>
<dbReference type="Pfam" id="PF13193">
    <property type="entry name" value="AMP-binding_C"/>
    <property type="match status" value="1"/>
</dbReference>
<dbReference type="SUPFAM" id="SSF56801">
    <property type="entry name" value="Acetyl-CoA synthetase-like"/>
    <property type="match status" value="1"/>
</dbReference>
<dbReference type="PROSITE" id="PS00455">
    <property type="entry name" value="AMP_BINDING"/>
    <property type="match status" value="1"/>
</dbReference>
<protein>
    <recommendedName>
        <fullName evidence="1">Acetyl-coenzyme A synthetase</fullName>
        <shortName evidence="1">AcCoA synthetase</shortName>
        <shortName evidence="1">Acs</shortName>
        <ecNumber evidence="1">6.2.1.1</ecNumber>
    </recommendedName>
    <alternativeName>
        <fullName evidence="1">Acetate--CoA ligase</fullName>
    </alternativeName>
    <alternativeName>
        <fullName evidence="1">Acyl-activating enzyme</fullName>
    </alternativeName>
</protein>
<accession>A6WM52</accession>
<comment type="function">
    <text evidence="1">Catalyzes the conversion of acetate into acetyl-CoA (AcCoA), an essential intermediate at the junction of anabolic and catabolic pathways. AcsA undergoes a two-step reaction. In the first half reaction, AcsA combines acetate with ATP to form acetyl-adenylate (AcAMP) intermediate. In the second half reaction, it can then transfer the acetyl group from AcAMP to the sulfhydryl group of CoA, forming the product AcCoA.</text>
</comment>
<comment type="catalytic activity">
    <reaction evidence="1">
        <text>acetate + ATP + CoA = acetyl-CoA + AMP + diphosphate</text>
        <dbReference type="Rhea" id="RHEA:23176"/>
        <dbReference type="ChEBI" id="CHEBI:30089"/>
        <dbReference type="ChEBI" id="CHEBI:30616"/>
        <dbReference type="ChEBI" id="CHEBI:33019"/>
        <dbReference type="ChEBI" id="CHEBI:57287"/>
        <dbReference type="ChEBI" id="CHEBI:57288"/>
        <dbReference type="ChEBI" id="CHEBI:456215"/>
        <dbReference type="EC" id="6.2.1.1"/>
    </reaction>
</comment>
<comment type="cofactor">
    <cofactor evidence="1">
        <name>Mg(2+)</name>
        <dbReference type="ChEBI" id="CHEBI:18420"/>
    </cofactor>
</comment>
<comment type="PTM">
    <text evidence="1">Acetylated. Deacetylation by the SIR2-homolog deacetylase activates the enzyme.</text>
</comment>
<comment type="similarity">
    <text evidence="1">Belongs to the ATP-dependent AMP-binding enzyme family.</text>
</comment>
<keyword id="KW-0007">Acetylation</keyword>
<keyword id="KW-0067">ATP-binding</keyword>
<keyword id="KW-0436">Ligase</keyword>
<keyword id="KW-0460">Magnesium</keyword>
<keyword id="KW-0479">Metal-binding</keyword>
<keyword id="KW-0547">Nucleotide-binding</keyword>
<reference key="1">
    <citation type="submission" date="2007-07" db="EMBL/GenBank/DDBJ databases">
        <title>Complete sequence of chromosome of Shewanella baltica OS185.</title>
        <authorList>
            <consortium name="US DOE Joint Genome Institute"/>
            <person name="Copeland A."/>
            <person name="Lucas S."/>
            <person name="Lapidus A."/>
            <person name="Barry K."/>
            <person name="Glavina del Rio T."/>
            <person name="Dalin E."/>
            <person name="Tice H."/>
            <person name="Pitluck S."/>
            <person name="Sims D."/>
            <person name="Brettin T."/>
            <person name="Bruce D."/>
            <person name="Detter J.C."/>
            <person name="Han C."/>
            <person name="Schmutz J."/>
            <person name="Larimer F."/>
            <person name="Land M."/>
            <person name="Hauser L."/>
            <person name="Kyrpides N."/>
            <person name="Mikhailova N."/>
            <person name="Brettar I."/>
            <person name="Rodrigues J."/>
            <person name="Konstantinidis K."/>
            <person name="Tiedje J."/>
            <person name="Richardson P."/>
        </authorList>
    </citation>
    <scope>NUCLEOTIDE SEQUENCE [LARGE SCALE GENOMIC DNA]</scope>
    <source>
        <strain>OS185</strain>
    </source>
</reference>
<organism>
    <name type="scientific">Shewanella baltica (strain OS185)</name>
    <dbReference type="NCBI Taxonomy" id="402882"/>
    <lineage>
        <taxon>Bacteria</taxon>
        <taxon>Pseudomonadati</taxon>
        <taxon>Pseudomonadota</taxon>
        <taxon>Gammaproteobacteria</taxon>
        <taxon>Alteromonadales</taxon>
        <taxon>Shewanellaceae</taxon>
        <taxon>Shewanella</taxon>
    </lineage>
</organism>
<sequence length="650" mass="72396">MSSQSLYKVSGNIAANALVNNDKYKTMYQESIVNPEGFWREHGKRIDWIKPYTKIKKTSFDDHNLSINWFYDGTLNASANCLDRHLAEHSDRVAIIWEGDNASEQRKITYGELHADVCKFANALRSQGVRRGDIVTIYMPMVPEAAVAMLACARIGAVHSVVFGGFSPDSIASRVIDGKSKVIITSDEGMRGGRAIPLKRNIDDALKNPDVTTVEKVIVLKRTGGKVDWVEGRDVWWHSLMETASEYCQPEEMDAEAPLFLLYTSGSTGNPKGVLHTTGGYMVYASMTHEYVFDYKAGEVYWCTADVGWITGHSYMVYGPLANGATVLIHEGVPNHPSPARLGEMIDRHKVSILYTAPTLIRALMAEGKQHFDKFDGSSLRIMGSVGEPINPEAWRWYHEVIGHEHCPIVDTWWQTETGGILITPLPGATDTKPGSATRPFFGVQPALVDNMGNILEGENEGNLVLLDSWPGQMRTVYGDHERFVLTYFKTFRGMYFTGDGARRDEDGYYWITGRVDDVINVSGHRLGTAEVESALVSHELVAEAAVVGYPHDIKGQGIYAYVTLTRGTEETEELRQELRQWVRKEIGALATPDLIQWATGLPKTRSGKIMRRFLRKIAANEVTNLGDASTLADPAVIETLIESRLNRTE</sequence>
<evidence type="ECO:0000255" key="1">
    <source>
        <dbReference type="HAMAP-Rule" id="MF_01123"/>
    </source>
</evidence>
<name>ACSA_SHEB8</name>
<feature type="chain" id="PRO_1000065317" description="Acetyl-coenzyme A synthetase">
    <location>
        <begin position="1"/>
        <end position="650"/>
    </location>
</feature>
<feature type="binding site" evidence="1">
    <location>
        <begin position="191"/>
        <end position="194"/>
    </location>
    <ligand>
        <name>CoA</name>
        <dbReference type="ChEBI" id="CHEBI:57287"/>
    </ligand>
</feature>
<feature type="binding site" evidence="1">
    <location>
        <position position="311"/>
    </location>
    <ligand>
        <name>CoA</name>
        <dbReference type="ChEBI" id="CHEBI:57287"/>
    </ligand>
</feature>
<feature type="binding site" evidence="1">
    <location>
        <position position="335"/>
    </location>
    <ligand>
        <name>CoA</name>
        <dbReference type="ChEBI" id="CHEBI:57287"/>
    </ligand>
</feature>
<feature type="binding site" evidence="1">
    <location>
        <begin position="387"/>
        <end position="389"/>
    </location>
    <ligand>
        <name>ATP</name>
        <dbReference type="ChEBI" id="CHEBI:30616"/>
    </ligand>
</feature>
<feature type="binding site" evidence="1">
    <location>
        <begin position="411"/>
        <end position="416"/>
    </location>
    <ligand>
        <name>ATP</name>
        <dbReference type="ChEBI" id="CHEBI:30616"/>
    </ligand>
</feature>
<feature type="binding site" evidence="1">
    <location>
        <position position="500"/>
    </location>
    <ligand>
        <name>ATP</name>
        <dbReference type="ChEBI" id="CHEBI:30616"/>
    </ligand>
</feature>
<feature type="binding site" evidence="1">
    <location>
        <position position="515"/>
    </location>
    <ligand>
        <name>ATP</name>
        <dbReference type="ChEBI" id="CHEBI:30616"/>
    </ligand>
</feature>
<feature type="binding site" evidence="1">
    <location>
        <position position="523"/>
    </location>
    <ligand>
        <name>CoA</name>
        <dbReference type="ChEBI" id="CHEBI:57287"/>
    </ligand>
</feature>
<feature type="binding site" evidence="1">
    <location>
        <position position="526"/>
    </location>
    <ligand>
        <name>ATP</name>
        <dbReference type="ChEBI" id="CHEBI:30616"/>
    </ligand>
</feature>
<feature type="binding site" evidence="1">
    <location>
        <position position="537"/>
    </location>
    <ligand>
        <name>Mg(2+)</name>
        <dbReference type="ChEBI" id="CHEBI:18420"/>
    </ligand>
</feature>
<feature type="binding site" evidence="1">
    <location>
        <position position="539"/>
    </location>
    <ligand>
        <name>Mg(2+)</name>
        <dbReference type="ChEBI" id="CHEBI:18420"/>
    </ligand>
</feature>
<feature type="binding site" evidence="1">
    <location>
        <position position="542"/>
    </location>
    <ligand>
        <name>Mg(2+)</name>
        <dbReference type="ChEBI" id="CHEBI:18420"/>
    </ligand>
</feature>
<feature type="binding site" evidence="1">
    <location>
        <position position="584"/>
    </location>
    <ligand>
        <name>CoA</name>
        <dbReference type="ChEBI" id="CHEBI:57287"/>
    </ligand>
</feature>
<feature type="modified residue" description="N6-acetyllysine" evidence="1">
    <location>
        <position position="609"/>
    </location>
</feature>
<gene>
    <name evidence="1" type="primary">acsA</name>
    <name type="ordered locus">Shew185_1748</name>
</gene>